<feature type="chain" id="PRO_1000067666" description="Large ribosomal subunit protein uL15">
    <location>
        <begin position="1"/>
        <end position="144"/>
    </location>
</feature>
<feature type="region of interest" description="Disordered" evidence="2">
    <location>
        <begin position="1"/>
        <end position="51"/>
    </location>
</feature>
<feature type="compositionally biased region" description="Gly residues" evidence="2">
    <location>
        <begin position="23"/>
        <end position="35"/>
    </location>
</feature>
<evidence type="ECO:0000255" key="1">
    <source>
        <dbReference type="HAMAP-Rule" id="MF_01341"/>
    </source>
</evidence>
<evidence type="ECO:0000256" key="2">
    <source>
        <dbReference type="SAM" id="MobiDB-lite"/>
    </source>
</evidence>
<evidence type="ECO:0000305" key="3"/>
<proteinExistence type="inferred from homology"/>
<name>RL15_LIMRD</name>
<reference key="1">
    <citation type="journal article" date="2011" name="PLoS Genet.">
        <title>The evolution of host specialization in the vertebrate gut symbiont Lactobacillus reuteri.</title>
        <authorList>
            <person name="Frese S.A."/>
            <person name="Benson A.K."/>
            <person name="Tannock G.W."/>
            <person name="Loach D.M."/>
            <person name="Kim J."/>
            <person name="Zhang M."/>
            <person name="Oh P.L."/>
            <person name="Heng N.C."/>
            <person name="Patil P.B."/>
            <person name="Juge N."/>
            <person name="Mackenzie D.A."/>
            <person name="Pearson B.M."/>
            <person name="Lapidus A."/>
            <person name="Dalin E."/>
            <person name="Tice H."/>
            <person name="Goltsman E."/>
            <person name="Land M."/>
            <person name="Hauser L."/>
            <person name="Ivanova N."/>
            <person name="Kyrpides N.C."/>
            <person name="Walter J."/>
        </authorList>
    </citation>
    <scope>NUCLEOTIDE SEQUENCE [LARGE SCALE GENOMIC DNA]</scope>
    <source>
        <strain>DSM 20016</strain>
    </source>
</reference>
<keyword id="KW-1185">Reference proteome</keyword>
<keyword id="KW-0687">Ribonucleoprotein</keyword>
<keyword id="KW-0689">Ribosomal protein</keyword>
<keyword id="KW-0694">RNA-binding</keyword>
<keyword id="KW-0699">rRNA-binding</keyword>
<protein>
    <recommendedName>
        <fullName evidence="1">Large ribosomal subunit protein uL15</fullName>
    </recommendedName>
    <alternativeName>
        <fullName evidence="3">50S ribosomal protein L15</fullName>
    </alternativeName>
</protein>
<accession>A5VLI6</accession>
<sequence length="144" mass="15447">MKLNELKPATGSRSKRLRKGRGLSSGHGFTSGRGTKGQKAHGKTRLGFEGGQMPLYRQIPKRGFTNINRKEYAIVNLASLNKFDDGTEVTPQLLMESGLVKNLKSGIKVLGSGKLEKKLTVKANKFSASAVSAIEAAGGKTEVM</sequence>
<dbReference type="EMBL" id="CP000705">
    <property type="protein sequence ID" value="ABQ83710.1"/>
    <property type="molecule type" value="Genomic_DNA"/>
</dbReference>
<dbReference type="RefSeq" id="WP_003668782.1">
    <property type="nucleotide sequence ID" value="NC_009513.1"/>
</dbReference>
<dbReference type="SMR" id="A5VLI6"/>
<dbReference type="STRING" id="557436.Lreu_1464"/>
<dbReference type="KEGG" id="lre:Lreu_1464"/>
<dbReference type="PATRIC" id="fig|557436.17.peg.159"/>
<dbReference type="eggNOG" id="COG0200">
    <property type="taxonomic scope" value="Bacteria"/>
</dbReference>
<dbReference type="HOGENOM" id="CLU_055188_4_2_9"/>
<dbReference type="Proteomes" id="UP000001991">
    <property type="component" value="Chromosome"/>
</dbReference>
<dbReference type="GO" id="GO:0022625">
    <property type="term" value="C:cytosolic large ribosomal subunit"/>
    <property type="evidence" value="ECO:0007669"/>
    <property type="project" value="TreeGrafter"/>
</dbReference>
<dbReference type="GO" id="GO:0019843">
    <property type="term" value="F:rRNA binding"/>
    <property type="evidence" value="ECO:0007669"/>
    <property type="project" value="UniProtKB-UniRule"/>
</dbReference>
<dbReference type="GO" id="GO:0003735">
    <property type="term" value="F:structural constituent of ribosome"/>
    <property type="evidence" value="ECO:0007669"/>
    <property type="project" value="InterPro"/>
</dbReference>
<dbReference type="GO" id="GO:0006412">
    <property type="term" value="P:translation"/>
    <property type="evidence" value="ECO:0007669"/>
    <property type="project" value="UniProtKB-UniRule"/>
</dbReference>
<dbReference type="FunFam" id="3.100.10.10:FF:000004">
    <property type="entry name" value="50S ribosomal protein L15"/>
    <property type="match status" value="1"/>
</dbReference>
<dbReference type="Gene3D" id="3.100.10.10">
    <property type="match status" value="1"/>
</dbReference>
<dbReference type="HAMAP" id="MF_01341">
    <property type="entry name" value="Ribosomal_uL15"/>
    <property type="match status" value="1"/>
</dbReference>
<dbReference type="InterPro" id="IPR030878">
    <property type="entry name" value="Ribosomal_uL15"/>
</dbReference>
<dbReference type="InterPro" id="IPR021131">
    <property type="entry name" value="Ribosomal_uL15/eL18"/>
</dbReference>
<dbReference type="InterPro" id="IPR036227">
    <property type="entry name" value="Ribosomal_uL15/eL18_sf"/>
</dbReference>
<dbReference type="InterPro" id="IPR005749">
    <property type="entry name" value="Ribosomal_uL15_bac-type"/>
</dbReference>
<dbReference type="InterPro" id="IPR001196">
    <property type="entry name" value="Ribosomal_uL15_CS"/>
</dbReference>
<dbReference type="NCBIfam" id="TIGR01071">
    <property type="entry name" value="rplO_bact"/>
    <property type="match status" value="1"/>
</dbReference>
<dbReference type="PANTHER" id="PTHR12934">
    <property type="entry name" value="50S RIBOSOMAL PROTEIN L15"/>
    <property type="match status" value="1"/>
</dbReference>
<dbReference type="PANTHER" id="PTHR12934:SF11">
    <property type="entry name" value="LARGE RIBOSOMAL SUBUNIT PROTEIN UL15M"/>
    <property type="match status" value="1"/>
</dbReference>
<dbReference type="Pfam" id="PF00828">
    <property type="entry name" value="Ribosomal_L27A"/>
    <property type="match status" value="1"/>
</dbReference>
<dbReference type="SUPFAM" id="SSF52080">
    <property type="entry name" value="Ribosomal proteins L15p and L18e"/>
    <property type="match status" value="1"/>
</dbReference>
<dbReference type="PROSITE" id="PS00475">
    <property type="entry name" value="RIBOSOMAL_L15"/>
    <property type="match status" value="1"/>
</dbReference>
<organism>
    <name type="scientific">Limosilactobacillus reuteri (strain DSM 20016)</name>
    <name type="common">Lactobacillus reuteri</name>
    <dbReference type="NCBI Taxonomy" id="557436"/>
    <lineage>
        <taxon>Bacteria</taxon>
        <taxon>Bacillati</taxon>
        <taxon>Bacillota</taxon>
        <taxon>Bacilli</taxon>
        <taxon>Lactobacillales</taxon>
        <taxon>Lactobacillaceae</taxon>
        <taxon>Limosilactobacillus</taxon>
    </lineage>
</organism>
<comment type="function">
    <text evidence="1">Binds to the 23S rRNA.</text>
</comment>
<comment type="subunit">
    <text evidence="1">Part of the 50S ribosomal subunit.</text>
</comment>
<comment type="similarity">
    <text evidence="1">Belongs to the universal ribosomal protein uL15 family.</text>
</comment>
<gene>
    <name evidence="1" type="primary">rplO</name>
    <name type="ordered locus">Lreu_1464</name>
</gene>